<comment type="function">
    <text evidence="1">Removes 5-oxoproline from various penultimate amino acid residues except L-proline.</text>
</comment>
<comment type="catalytic activity">
    <reaction evidence="1">
        <text>Release of an N-terminal pyroglutamyl group from a polypeptide, the second amino acid generally not being Pro.</text>
        <dbReference type="EC" id="3.4.19.3"/>
    </reaction>
</comment>
<comment type="subunit">
    <text evidence="1">Homotetramer.</text>
</comment>
<comment type="subcellular location">
    <subcellularLocation>
        <location evidence="1">Cytoplasm</location>
    </subcellularLocation>
</comment>
<comment type="similarity">
    <text evidence="1">Belongs to the peptidase C15 family.</text>
</comment>
<proteinExistence type="inferred from homology"/>
<gene>
    <name evidence="1" type="primary">pcp</name>
    <name type="ordered locus">Teth39_0955</name>
</gene>
<sequence length="203" mass="22357">MKILVTAFDPFGGENINPSYEVLKNLKDNIEGAEIIKIQVPTVFYLSVEKVIEKIKEVKPDAVLSIGQAGGRYDITVERIAINIDDARIPDNIGQQPIDTPIDPEGAPAYFATIPIKEIVEEIKKENIPASISNTAGTFVCNHLMYGILNYVHKNGLNIKAGFIHIPYLPVQVLNKPYTPSMSLGDMVKAIETAIKVIAKKSR</sequence>
<dbReference type="EC" id="3.4.19.3" evidence="1"/>
<dbReference type="EMBL" id="CP000924">
    <property type="protein sequence ID" value="ABY94610.1"/>
    <property type="molecule type" value="Genomic_DNA"/>
</dbReference>
<dbReference type="RefSeq" id="WP_012268696.1">
    <property type="nucleotide sequence ID" value="NC_010321.1"/>
</dbReference>
<dbReference type="SMR" id="B0K8Z7"/>
<dbReference type="STRING" id="340099.Teth39_0955"/>
<dbReference type="MEROPS" id="C15.001"/>
<dbReference type="KEGG" id="tpd:Teth39_0955"/>
<dbReference type="eggNOG" id="COG2039">
    <property type="taxonomic scope" value="Bacteria"/>
</dbReference>
<dbReference type="HOGENOM" id="CLU_043960_4_0_9"/>
<dbReference type="Proteomes" id="UP000002156">
    <property type="component" value="Chromosome"/>
</dbReference>
<dbReference type="GO" id="GO:0005829">
    <property type="term" value="C:cytosol"/>
    <property type="evidence" value="ECO:0007669"/>
    <property type="project" value="InterPro"/>
</dbReference>
<dbReference type="GO" id="GO:0016920">
    <property type="term" value="F:pyroglutamyl-peptidase activity"/>
    <property type="evidence" value="ECO:0007669"/>
    <property type="project" value="UniProtKB-UniRule"/>
</dbReference>
<dbReference type="GO" id="GO:0006508">
    <property type="term" value="P:proteolysis"/>
    <property type="evidence" value="ECO:0007669"/>
    <property type="project" value="UniProtKB-KW"/>
</dbReference>
<dbReference type="CDD" id="cd00501">
    <property type="entry name" value="Peptidase_C15"/>
    <property type="match status" value="1"/>
</dbReference>
<dbReference type="FunFam" id="3.40.630.20:FF:000001">
    <property type="entry name" value="Pyrrolidone-carboxylate peptidase"/>
    <property type="match status" value="1"/>
</dbReference>
<dbReference type="Gene3D" id="3.40.630.20">
    <property type="entry name" value="Peptidase C15, pyroglutamyl peptidase I-like"/>
    <property type="match status" value="1"/>
</dbReference>
<dbReference type="HAMAP" id="MF_00417">
    <property type="entry name" value="Pyrrolid_peptidase"/>
    <property type="match status" value="1"/>
</dbReference>
<dbReference type="InterPro" id="IPR000816">
    <property type="entry name" value="Peptidase_C15"/>
</dbReference>
<dbReference type="InterPro" id="IPR016125">
    <property type="entry name" value="Peptidase_C15-like"/>
</dbReference>
<dbReference type="InterPro" id="IPR036440">
    <property type="entry name" value="Peptidase_C15-like_sf"/>
</dbReference>
<dbReference type="InterPro" id="IPR029762">
    <property type="entry name" value="PGP-I_bact-type"/>
</dbReference>
<dbReference type="InterPro" id="IPR033694">
    <property type="entry name" value="PGPEP1_Cys_AS"/>
</dbReference>
<dbReference type="InterPro" id="IPR033693">
    <property type="entry name" value="PGPEP1_Glu_AS"/>
</dbReference>
<dbReference type="NCBIfam" id="NF009676">
    <property type="entry name" value="PRK13197.1"/>
    <property type="match status" value="1"/>
</dbReference>
<dbReference type="NCBIfam" id="TIGR00504">
    <property type="entry name" value="pyro_pdase"/>
    <property type="match status" value="1"/>
</dbReference>
<dbReference type="PANTHER" id="PTHR23402">
    <property type="entry name" value="PROTEASE FAMILY C15 PYROGLUTAMYL-PEPTIDASE I-RELATED"/>
    <property type="match status" value="1"/>
</dbReference>
<dbReference type="PANTHER" id="PTHR23402:SF1">
    <property type="entry name" value="PYROGLUTAMYL-PEPTIDASE I"/>
    <property type="match status" value="1"/>
</dbReference>
<dbReference type="Pfam" id="PF01470">
    <property type="entry name" value="Peptidase_C15"/>
    <property type="match status" value="1"/>
</dbReference>
<dbReference type="PIRSF" id="PIRSF015592">
    <property type="entry name" value="Prld-crbxl_pptds"/>
    <property type="match status" value="1"/>
</dbReference>
<dbReference type="PRINTS" id="PR00706">
    <property type="entry name" value="PYROGLUPTASE"/>
</dbReference>
<dbReference type="SUPFAM" id="SSF53182">
    <property type="entry name" value="Pyrrolidone carboxyl peptidase (pyroglutamate aminopeptidase)"/>
    <property type="match status" value="1"/>
</dbReference>
<dbReference type="PROSITE" id="PS01334">
    <property type="entry name" value="PYRASE_CYS"/>
    <property type="match status" value="1"/>
</dbReference>
<dbReference type="PROSITE" id="PS01333">
    <property type="entry name" value="PYRASE_GLU"/>
    <property type="match status" value="1"/>
</dbReference>
<feature type="chain" id="PRO_1000124006" description="Pyrrolidone-carboxylate peptidase">
    <location>
        <begin position="1"/>
        <end position="203"/>
    </location>
</feature>
<feature type="active site" evidence="1">
    <location>
        <position position="78"/>
    </location>
</feature>
<feature type="active site" evidence="1">
    <location>
        <position position="141"/>
    </location>
</feature>
<feature type="active site" evidence="1">
    <location>
        <position position="165"/>
    </location>
</feature>
<accession>B0K8Z7</accession>
<reference key="1">
    <citation type="submission" date="2008-01" db="EMBL/GenBank/DDBJ databases">
        <title>Complete sequence of Thermoanaerobacter pseudethanolicus 39E.</title>
        <authorList>
            <person name="Copeland A."/>
            <person name="Lucas S."/>
            <person name="Lapidus A."/>
            <person name="Barry K."/>
            <person name="Glavina del Rio T."/>
            <person name="Dalin E."/>
            <person name="Tice H."/>
            <person name="Pitluck S."/>
            <person name="Bruce D."/>
            <person name="Goodwin L."/>
            <person name="Saunders E."/>
            <person name="Brettin T."/>
            <person name="Detter J.C."/>
            <person name="Han C."/>
            <person name="Schmutz J."/>
            <person name="Larimer F."/>
            <person name="Land M."/>
            <person name="Hauser L."/>
            <person name="Kyrpides N."/>
            <person name="Lykidis A."/>
            <person name="Hemme C."/>
            <person name="Fields M.W."/>
            <person name="He Z."/>
            <person name="Zhou J."/>
            <person name="Richardson P."/>
        </authorList>
    </citation>
    <scope>NUCLEOTIDE SEQUENCE [LARGE SCALE GENOMIC DNA]</scope>
    <source>
        <strain>ATCC 33223 / DSM 2355 / 39E</strain>
    </source>
</reference>
<evidence type="ECO:0000255" key="1">
    <source>
        <dbReference type="HAMAP-Rule" id="MF_00417"/>
    </source>
</evidence>
<name>PCP_THEP3</name>
<keyword id="KW-0963">Cytoplasm</keyword>
<keyword id="KW-0378">Hydrolase</keyword>
<keyword id="KW-0645">Protease</keyword>
<keyword id="KW-1185">Reference proteome</keyword>
<keyword id="KW-0788">Thiol protease</keyword>
<organism>
    <name type="scientific">Thermoanaerobacter pseudethanolicus (strain ATCC 33223 / 39E)</name>
    <name type="common">Clostridium thermohydrosulfuricum</name>
    <dbReference type="NCBI Taxonomy" id="340099"/>
    <lineage>
        <taxon>Bacteria</taxon>
        <taxon>Bacillati</taxon>
        <taxon>Bacillota</taxon>
        <taxon>Clostridia</taxon>
        <taxon>Thermoanaerobacterales</taxon>
        <taxon>Thermoanaerobacteraceae</taxon>
        <taxon>Thermoanaerobacter</taxon>
    </lineage>
</organism>
<protein>
    <recommendedName>
        <fullName evidence="1">Pyrrolidone-carboxylate peptidase</fullName>
        <ecNumber evidence="1">3.4.19.3</ecNumber>
    </recommendedName>
    <alternativeName>
        <fullName evidence="1">5-oxoprolyl-peptidase</fullName>
    </alternativeName>
    <alternativeName>
        <fullName evidence="1">Pyroglutamyl-peptidase I</fullName>
        <shortName evidence="1">PGP-I</shortName>
        <shortName evidence="1">Pyrase</shortName>
    </alternativeName>
</protein>